<organism>
    <name type="scientific">Fervidobacterium nodosum (strain ATCC 35602 / DSM 5306 / Rt17-B1)</name>
    <dbReference type="NCBI Taxonomy" id="381764"/>
    <lineage>
        <taxon>Bacteria</taxon>
        <taxon>Thermotogati</taxon>
        <taxon>Thermotogota</taxon>
        <taxon>Thermotogae</taxon>
        <taxon>Thermotogales</taxon>
        <taxon>Fervidobacteriaceae</taxon>
        <taxon>Fervidobacterium</taxon>
    </lineage>
</organism>
<evidence type="ECO:0000250" key="1"/>
<evidence type="ECO:0000305" key="2"/>
<sequence length="395" mass="43765">MFNYKILEDEMENLKNEGLYINIRTLESPQGAWIVVNGKRVLNLCSNNYLGFASDERLKQAAKKAIDEWGVGPGAVRTIAGTMKIHEELEKALAEFKGADATIFLQSGFIANQAAIPTVFGDENDAIISDELNHASIIDGVRLSKAKRYVYKHNDMNELEARLKEARDVQKARRILIITDGVFSMDGDIAPLPEIVELAEKYEAAVMVDDAHGEGVLGRGGRGIVDHFGLHGRVDMEIGTLSKAFGVLGGYIAGKETLIRYLKQKARPFLFSTGLTPADVAACLEAVKILQESDERVKRLWDNANYFKSEMKKLGFDLGVSQTPITPVMLYDAKVASQFSRELFEEGIFAQSIGYPTVPKGKARIRVMISAVHTKEDLDFALDKFEKVGKKFAII</sequence>
<feature type="chain" id="PRO_0000380992" description="8-amino-7-oxononanoate synthase">
    <location>
        <begin position="1"/>
        <end position="395"/>
    </location>
</feature>
<feature type="binding site" evidence="1">
    <location>
        <begin position="108"/>
        <end position="109"/>
    </location>
    <ligand>
        <name>pyridoxal 5'-phosphate</name>
        <dbReference type="ChEBI" id="CHEBI:597326"/>
    </ligand>
</feature>
<feature type="binding site" evidence="1">
    <location>
        <position position="134"/>
    </location>
    <ligand>
        <name>substrate</name>
    </ligand>
</feature>
<feature type="binding site" evidence="1">
    <location>
        <position position="184"/>
    </location>
    <ligand>
        <name>pyridoxal 5'-phosphate</name>
        <dbReference type="ChEBI" id="CHEBI:597326"/>
    </ligand>
</feature>
<feature type="binding site" evidence="1">
    <location>
        <begin position="209"/>
        <end position="212"/>
    </location>
    <ligand>
        <name>pyridoxal 5'-phosphate</name>
        <dbReference type="ChEBI" id="CHEBI:597326"/>
    </ligand>
</feature>
<feature type="binding site" evidence="1">
    <location>
        <begin position="240"/>
        <end position="243"/>
    </location>
    <ligand>
        <name>pyridoxal 5'-phosphate</name>
        <dbReference type="ChEBI" id="CHEBI:597326"/>
    </ligand>
</feature>
<feature type="binding site" evidence="1">
    <location>
        <position position="357"/>
    </location>
    <ligand>
        <name>substrate</name>
    </ligand>
</feature>
<feature type="modified residue" description="N6-(pyridoxal phosphate)lysine" evidence="1">
    <location>
        <position position="243"/>
    </location>
</feature>
<reference key="1">
    <citation type="submission" date="2007-07" db="EMBL/GenBank/DDBJ databases">
        <title>Complete sequence of Fervidobacterium nodosum Rt17-B1.</title>
        <authorList>
            <consortium name="US DOE Joint Genome Institute"/>
            <person name="Copeland A."/>
            <person name="Lucas S."/>
            <person name="Lapidus A."/>
            <person name="Barry K."/>
            <person name="Glavina del Rio T."/>
            <person name="Dalin E."/>
            <person name="Tice H."/>
            <person name="Pitluck S."/>
            <person name="Saunders E."/>
            <person name="Brettin T."/>
            <person name="Bruce D."/>
            <person name="Detter J.C."/>
            <person name="Han C."/>
            <person name="Schmutz J."/>
            <person name="Larimer F."/>
            <person name="Land M."/>
            <person name="Hauser L."/>
            <person name="Kyrpides N."/>
            <person name="Mikhailova N."/>
            <person name="Nelson K."/>
            <person name="Gogarten J.P."/>
            <person name="Noll K."/>
            <person name="Richardson P."/>
        </authorList>
    </citation>
    <scope>NUCLEOTIDE SEQUENCE [LARGE SCALE GENOMIC DNA]</scope>
    <source>
        <strain>ATCC 35602 / DSM 5306 / Rt17-B1</strain>
    </source>
</reference>
<proteinExistence type="inferred from homology"/>
<name>BIOF_FERNB</name>
<protein>
    <recommendedName>
        <fullName>8-amino-7-oxononanoate synthase</fullName>
        <shortName>AONS</shortName>
        <ecNumber>2.3.1.47</ecNumber>
    </recommendedName>
    <alternativeName>
        <fullName>7-keto-8-amino-pelargonic acid synthase</fullName>
        <shortName>7-KAP synthase</shortName>
        <shortName>KAPA synthase</shortName>
    </alternativeName>
    <alternativeName>
        <fullName>8-amino-7-ketopelargonate synthase</fullName>
    </alternativeName>
    <alternativeName>
        <fullName>Alpha-oxoamine synthase</fullName>
    </alternativeName>
</protein>
<accession>A7HMM1</accession>
<keyword id="KW-0012">Acyltransferase</keyword>
<keyword id="KW-0093">Biotin biosynthesis</keyword>
<keyword id="KW-0663">Pyridoxal phosphate</keyword>
<keyword id="KW-1185">Reference proteome</keyword>
<keyword id="KW-0808">Transferase</keyword>
<comment type="function">
    <text evidence="1">Catalyzes the decarboxylative condensation of pimeloyl-[acyl-carrier protein] and L-alanine to produce 8-amino-7-oxononanoate (AON), [acyl-carrier protein], and carbon dioxide.</text>
</comment>
<comment type="catalytic activity">
    <reaction>
        <text>6-carboxyhexanoyl-[ACP] + L-alanine + H(+) = (8S)-8-amino-7-oxononanoate + holo-[ACP] + CO2</text>
        <dbReference type="Rhea" id="RHEA:42288"/>
        <dbReference type="Rhea" id="RHEA-COMP:9685"/>
        <dbReference type="Rhea" id="RHEA-COMP:9955"/>
        <dbReference type="ChEBI" id="CHEBI:15378"/>
        <dbReference type="ChEBI" id="CHEBI:16526"/>
        <dbReference type="ChEBI" id="CHEBI:57972"/>
        <dbReference type="ChEBI" id="CHEBI:64479"/>
        <dbReference type="ChEBI" id="CHEBI:78846"/>
        <dbReference type="ChEBI" id="CHEBI:149468"/>
        <dbReference type="EC" id="2.3.1.47"/>
    </reaction>
</comment>
<comment type="cofactor">
    <cofactor evidence="1">
        <name>pyridoxal 5'-phosphate</name>
        <dbReference type="ChEBI" id="CHEBI:597326"/>
    </cofactor>
</comment>
<comment type="pathway">
    <text>Cofactor biosynthesis; biotin biosynthesis.</text>
</comment>
<comment type="subunit">
    <text evidence="1">Homodimer.</text>
</comment>
<comment type="similarity">
    <text evidence="2">Belongs to the class-II pyridoxal-phosphate-dependent aminotransferase family. BioF subfamily.</text>
</comment>
<gene>
    <name type="ordered locus">Fnod_1307</name>
</gene>
<dbReference type="EC" id="2.3.1.47"/>
<dbReference type="EMBL" id="CP000771">
    <property type="protein sequence ID" value="ABS61154.1"/>
    <property type="molecule type" value="Genomic_DNA"/>
</dbReference>
<dbReference type="RefSeq" id="WP_011994463.1">
    <property type="nucleotide sequence ID" value="NC_009718.1"/>
</dbReference>
<dbReference type="SMR" id="A7HMM1"/>
<dbReference type="STRING" id="381764.Fnod_1307"/>
<dbReference type="KEGG" id="fno:Fnod_1307"/>
<dbReference type="eggNOG" id="COG0156">
    <property type="taxonomic scope" value="Bacteria"/>
</dbReference>
<dbReference type="HOGENOM" id="CLU_015846_11_0_0"/>
<dbReference type="OrthoDB" id="9807157at2"/>
<dbReference type="UniPathway" id="UPA00078"/>
<dbReference type="Proteomes" id="UP000002415">
    <property type="component" value="Chromosome"/>
</dbReference>
<dbReference type="GO" id="GO:0008710">
    <property type="term" value="F:8-amino-7-oxononanoate synthase activity"/>
    <property type="evidence" value="ECO:0000250"/>
    <property type="project" value="UniProtKB"/>
</dbReference>
<dbReference type="GO" id="GO:0008890">
    <property type="term" value="F:glycine C-acetyltransferase activity"/>
    <property type="evidence" value="ECO:0000250"/>
    <property type="project" value="UniProtKB"/>
</dbReference>
<dbReference type="GO" id="GO:0030170">
    <property type="term" value="F:pyridoxal phosphate binding"/>
    <property type="evidence" value="ECO:0000250"/>
    <property type="project" value="UniProtKB"/>
</dbReference>
<dbReference type="GO" id="GO:0009102">
    <property type="term" value="P:biotin biosynthetic process"/>
    <property type="evidence" value="ECO:0000250"/>
    <property type="project" value="UniProtKB"/>
</dbReference>
<dbReference type="CDD" id="cd06454">
    <property type="entry name" value="KBL_like"/>
    <property type="match status" value="1"/>
</dbReference>
<dbReference type="FunFam" id="3.90.1150.10:FF:000004">
    <property type="entry name" value="2-amino-3-ketobutyrate coenzyme A ligase"/>
    <property type="match status" value="1"/>
</dbReference>
<dbReference type="FunFam" id="3.40.640.10:FF:000006">
    <property type="entry name" value="5-aminolevulinate synthase, mitochondrial"/>
    <property type="match status" value="1"/>
</dbReference>
<dbReference type="Gene3D" id="3.90.1150.10">
    <property type="entry name" value="Aspartate Aminotransferase, domain 1"/>
    <property type="match status" value="1"/>
</dbReference>
<dbReference type="Gene3D" id="3.40.640.10">
    <property type="entry name" value="Type I PLP-dependent aspartate aminotransferase-like (Major domain)"/>
    <property type="match status" value="1"/>
</dbReference>
<dbReference type="InterPro" id="IPR001917">
    <property type="entry name" value="Aminotrans_II_pyridoxalP_BS"/>
</dbReference>
<dbReference type="InterPro" id="IPR004839">
    <property type="entry name" value="Aminotransferase_I/II_large"/>
</dbReference>
<dbReference type="InterPro" id="IPR050087">
    <property type="entry name" value="AON_synthase_class-II"/>
</dbReference>
<dbReference type="InterPro" id="IPR010962">
    <property type="entry name" value="AONS_Archaea/Firmicutes"/>
</dbReference>
<dbReference type="InterPro" id="IPR004723">
    <property type="entry name" value="AONS_Archaea/Proteobacteria"/>
</dbReference>
<dbReference type="InterPro" id="IPR015424">
    <property type="entry name" value="PyrdxlP-dep_Trfase"/>
</dbReference>
<dbReference type="InterPro" id="IPR015421">
    <property type="entry name" value="PyrdxlP-dep_Trfase_major"/>
</dbReference>
<dbReference type="InterPro" id="IPR015422">
    <property type="entry name" value="PyrdxlP-dep_Trfase_small"/>
</dbReference>
<dbReference type="NCBIfam" id="TIGR00858">
    <property type="entry name" value="bioF"/>
    <property type="match status" value="1"/>
</dbReference>
<dbReference type="NCBIfam" id="TIGR01825">
    <property type="entry name" value="gly_Cac_T_rel"/>
    <property type="match status" value="1"/>
</dbReference>
<dbReference type="NCBIfam" id="NF005394">
    <property type="entry name" value="PRK06939.1"/>
    <property type="match status" value="1"/>
</dbReference>
<dbReference type="PANTHER" id="PTHR13693">
    <property type="entry name" value="CLASS II AMINOTRANSFERASE/8-AMINO-7-OXONONANOATE SYNTHASE"/>
    <property type="match status" value="1"/>
</dbReference>
<dbReference type="PANTHER" id="PTHR13693:SF3">
    <property type="entry name" value="LD36009P"/>
    <property type="match status" value="1"/>
</dbReference>
<dbReference type="Pfam" id="PF00155">
    <property type="entry name" value="Aminotran_1_2"/>
    <property type="match status" value="1"/>
</dbReference>
<dbReference type="SUPFAM" id="SSF53383">
    <property type="entry name" value="PLP-dependent transferases"/>
    <property type="match status" value="1"/>
</dbReference>
<dbReference type="PROSITE" id="PS00599">
    <property type="entry name" value="AA_TRANSFER_CLASS_2"/>
    <property type="match status" value="1"/>
</dbReference>